<accession>Q8ZY15</accession>
<proteinExistence type="inferred from homology"/>
<sequence length="186" mass="20123">MPYVRKTLETEVAVELRRGGDLAVETPIPFLTHMLETLLKYAGLGGVVKAVELRKLDDGHHVIEDVAIAVGRALDALLEDRRGIARFGHAVVPMDESIVMAAVDLGGRAYWVVRAKLPDVTIGGYPLRMFPHFVRTLAVEAKATIHIYARGTDPHHKVEAAHKALGLALRQALSPGEGLSTKGVLG</sequence>
<protein>
    <recommendedName>
        <fullName evidence="1">Imidazoleglycerol-phosphate dehydratase</fullName>
        <shortName evidence="1">IGPD</shortName>
        <ecNumber evidence="1">4.2.1.19</ecNumber>
    </recommendedName>
</protein>
<comment type="catalytic activity">
    <reaction evidence="1">
        <text>D-erythro-1-(imidazol-4-yl)glycerol 3-phosphate = 3-(imidazol-4-yl)-2-oxopropyl phosphate + H2O</text>
        <dbReference type="Rhea" id="RHEA:11040"/>
        <dbReference type="ChEBI" id="CHEBI:15377"/>
        <dbReference type="ChEBI" id="CHEBI:57766"/>
        <dbReference type="ChEBI" id="CHEBI:58278"/>
        <dbReference type="EC" id="4.2.1.19"/>
    </reaction>
</comment>
<comment type="pathway">
    <text evidence="1">Amino-acid biosynthesis; L-histidine biosynthesis; L-histidine from 5-phospho-alpha-D-ribose 1-diphosphate: step 6/9.</text>
</comment>
<comment type="subcellular location">
    <subcellularLocation>
        <location evidence="1">Cytoplasm</location>
    </subcellularLocation>
</comment>
<comment type="similarity">
    <text evidence="1">Belongs to the imidazoleglycerol-phosphate dehydratase family.</text>
</comment>
<evidence type="ECO:0000255" key="1">
    <source>
        <dbReference type="HAMAP-Rule" id="MF_00076"/>
    </source>
</evidence>
<name>HIS7_PYRAE</name>
<dbReference type="EC" id="4.2.1.19" evidence="1"/>
<dbReference type="EMBL" id="AE009441">
    <property type="protein sequence ID" value="AAL63181.1"/>
    <property type="molecule type" value="Genomic_DNA"/>
</dbReference>
<dbReference type="RefSeq" id="WP_011007653.1">
    <property type="nucleotide sequence ID" value="NC_003364.1"/>
</dbReference>
<dbReference type="SMR" id="Q8ZY15"/>
<dbReference type="FunCoup" id="Q8ZY15">
    <property type="interactions" value="93"/>
</dbReference>
<dbReference type="STRING" id="178306.PAE0990"/>
<dbReference type="EnsemblBacteria" id="AAL63181">
    <property type="protein sequence ID" value="AAL63181"/>
    <property type="gene ID" value="PAE0990"/>
</dbReference>
<dbReference type="GeneID" id="1465416"/>
<dbReference type="KEGG" id="pai:PAE0990"/>
<dbReference type="PATRIC" id="fig|178306.9.peg.736"/>
<dbReference type="eggNOG" id="arCOG04398">
    <property type="taxonomic scope" value="Archaea"/>
</dbReference>
<dbReference type="HOGENOM" id="CLU_044308_2_0_2"/>
<dbReference type="InParanoid" id="Q8ZY15"/>
<dbReference type="UniPathway" id="UPA00031">
    <property type="reaction ID" value="UER00011"/>
</dbReference>
<dbReference type="Proteomes" id="UP000002439">
    <property type="component" value="Chromosome"/>
</dbReference>
<dbReference type="GO" id="GO:0005737">
    <property type="term" value="C:cytoplasm"/>
    <property type="evidence" value="ECO:0007669"/>
    <property type="project" value="UniProtKB-SubCell"/>
</dbReference>
<dbReference type="GO" id="GO:0004424">
    <property type="term" value="F:imidazoleglycerol-phosphate dehydratase activity"/>
    <property type="evidence" value="ECO:0000318"/>
    <property type="project" value="GO_Central"/>
</dbReference>
<dbReference type="GO" id="GO:0000105">
    <property type="term" value="P:L-histidine biosynthetic process"/>
    <property type="evidence" value="ECO:0000318"/>
    <property type="project" value="GO_Central"/>
</dbReference>
<dbReference type="FunFam" id="3.30.230.40:FF:000001">
    <property type="entry name" value="Imidazoleglycerol-phosphate dehydratase HisB"/>
    <property type="match status" value="1"/>
</dbReference>
<dbReference type="FunFam" id="3.30.230.40:FF:000003">
    <property type="entry name" value="Imidazoleglycerol-phosphate dehydratase HisB"/>
    <property type="match status" value="1"/>
</dbReference>
<dbReference type="Gene3D" id="3.30.230.40">
    <property type="entry name" value="Imidazole glycerol phosphate dehydratase, domain 1"/>
    <property type="match status" value="2"/>
</dbReference>
<dbReference type="HAMAP" id="MF_00076">
    <property type="entry name" value="HisB"/>
    <property type="match status" value="1"/>
</dbReference>
<dbReference type="InterPro" id="IPR038494">
    <property type="entry name" value="IGPD_sf"/>
</dbReference>
<dbReference type="InterPro" id="IPR000807">
    <property type="entry name" value="ImidazoleglycerolP_deHydtase"/>
</dbReference>
<dbReference type="InterPro" id="IPR020565">
    <property type="entry name" value="ImidazoleglycerP_deHydtase_CS"/>
</dbReference>
<dbReference type="InterPro" id="IPR020568">
    <property type="entry name" value="Ribosomal_Su5_D2-typ_SF"/>
</dbReference>
<dbReference type="PANTHER" id="PTHR23133:SF2">
    <property type="entry name" value="IMIDAZOLEGLYCEROL-PHOSPHATE DEHYDRATASE"/>
    <property type="match status" value="1"/>
</dbReference>
<dbReference type="PANTHER" id="PTHR23133">
    <property type="entry name" value="IMIDAZOLEGLYCEROL-PHOSPHATE DEHYDRATASE HIS7"/>
    <property type="match status" value="1"/>
</dbReference>
<dbReference type="Pfam" id="PF00475">
    <property type="entry name" value="IGPD"/>
    <property type="match status" value="1"/>
</dbReference>
<dbReference type="SUPFAM" id="SSF54211">
    <property type="entry name" value="Ribosomal protein S5 domain 2-like"/>
    <property type="match status" value="2"/>
</dbReference>
<dbReference type="PROSITE" id="PS00955">
    <property type="entry name" value="IGP_DEHYDRATASE_2"/>
    <property type="match status" value="1"/>
</dbReference>
<organism>
    <name type="scientific">Pyrobaculum aerophilum (strain ATCC 51768 / DSM 7523 / JCM 9630 / CIP 104966 / NBRC 100827 / IM2)</name>
    <dbReference type="NCBI Taxonomy" id="178306"/>
    <lineage>
        <taxon>Archaea</taxon>
        <taxon>Thermoproteota</taxon>
        <taxon>Thermoprotei</taxon>
        <taxon>Thermoproteales</taxon>
        <taxon>Thermoproteaceae</taxon>
        <taxon>Pyrobaculum</taxon>
    </lineage>
</organism>
<feature type="chain" id="PRO_0000158194" description="Imidazoleglycerol-phosphate dehydratase">
    <location>
        <begin position="1"/>
        <end position="186"/>
    </location>
</feature>
<gene>
    <name evidence="1" type="primary">hisB</name>
    <name type="ordered locus">PAE0990</name>
</gene>
<reference key="1">
    <citation type="journal article" date="2002" name="Proc. Natl. Acad. Sci. U.S.A.">
        <title>Genome sequence of the hyperthermophilic crenarchaeon Pyrobaculum aerophilum.</title>
        <authorList>
            <person name="Fitz-Gibbon S.T."/>
            <person name="Ladner H."/>
            <person name="Kim U.-J."/>
            <person name="Stetter K.O."/>
            <person name="Simon M.I."/>
            <person name="Miller J.H."/>
        </authorList>
    </citation>
    <scope>NUCLEOTIDE SEQUENCE [LARGE SCALE GENOMIC DNA]</scope>
    <source>
        <strain>ATCC 51768 / DSM 7523 / JCM 9630 / CIP 104966 / NBRC 100827 / IM2</strain>
    </source>
</reference>
<keyword id="KW-0028">Amino-acid biosynthesis</keyword>
<keyword id="KW-0963">Cytoplasm</keyword>
<keyword id="KW-0368">Histidine biosynthesis</keyword>
<keyword id="KW-0456">Lyase</keyword>
<keyword id="KW-1185">Reference proteome</keyword>